<organism>
    <name type="scientific">Salmonella heidelberg (strain SL476)</name>
    <dbReference type="NCBI Taxonomy" id="454169"/>
    <lineage>
        <taxon>Bacteria</taxon>
        <taxon>Pseudomonadati</taxon>
        <taxon>Pseudomonadota</taxon>
        <taxon>Gammaproteobacteria</taxon>
        <taxon>Enterobacterales</taxon>
        <taxon>Enterobacteriaceae</taxon>
        <taxon>Salmonella</taxon>
    </lineage>
</organism>
<gene>
    <name evidence="1" type="primary">pyrB</name>
    <name type="ordered locus">SeHA_C4863</name>
</gene>
<feature type="chain" id="PRO_1000088798" description="Aspartate carbamoyltransferase catalytic subunit">
    <location>
        <begin position="1"/>
        <end position="311"/>
    </location>
</feature>
<feature type="binding site" evidence="1">
    <location>
        <position position="55"/>
    </location>
    <ligand>
        <name>carbamoyl phosphate</name>
        <dbReference type="ChEBI" id="CHEBI:58228"/>
    </ligand>
</feature>
<feature type="binding site" evidence="1">
    <location>
        <position position="56"/>
    </location>
    <ligand>
        <name>carbamoyl phosphate</name>
        <dbReference type="ChEBI" id="CHEBI:58228"/>
    </ligand>
</feature>
<feature type="binding site" evidence="1">
    <location>
        <position position="85"/>
    </location>
    <ligand>
        <name>L-aspartate</name>
        <dbReference type="ChEBI" id="CHEBI:29991"/>
    </ligand>
</feature>
<feature type="binding site" evidence="1">
    <location>
        <position position="106"/>
    </location>
    <ligand>
        <name>carbamoyl phosphate</name>
        <dbReference type="ChEBI" id="CHEBI:58228"/>
    </ligand>
</feature>
<feature type="binding site" evidence="1">
    <location>
        <position position="135"/>
    </location>
    <ligand>
        <name>carbamoyl phosphate</name>
        <dbReference type="ChEBI" id="CHEBI:58228"/>
    </ligand>
</feature>
<feature type="binding site" evidence="1">
    <location>
        <position position="138"/>
    </location>
    <ligand>
        <name>carbamoyl phosphate</name>
        <dbReference type="ChEBI" id="CHEBI:58228"/>
    </ligand>
</feature>
<feature type="binding site" evidence="1">
    <location>
        <position position="168"/>
    </location>
    <ligand>
        <name>L-aspartate</name>
        <dbReference type="ChEBI" id="CHEBI:29991"/>
    </ligand>
</feature>
<feature type="binding site" evidence="1">
    <location>
        <position position="230"/>
    </location>
    <ligand>
        <name>L-aspartate</name>
        <dbReference type="ChEBI" id="CHEBI:29991"/>
    </ligand>
</feature>
<feature type="binding site" evidence="1">
    <location>
        <position position="268"/>
    </location>
    <ligand>
        <name>carbamoyl phosphate</name>
        <dbReference type="ChEBI" id="CHEBI:58228"/>
    </ligand>
</feature>
<feature type="binding site" evidence="1">
    <location>
        <position position="269"/>
    </location>
    <ligand>
        <name>carbamoyl phosphate</name>
        <dbReference type="ChEBI" id="CHEBI:58228"/>
    </ligand>
</feature>
<keyword id="KW-0665">Pyrimidine biosynthesis</keyword>
<keyword id="KW-0808">Transferase</keyword>
<sequence length="311" mass="34384">MANPLYQKHIISINDLSRDDLNLVLATAAKLKANPQPELLKHKVIASCFFEASTRTRLSFETSMHRLGASVVGFSDSANTSLGKKGETLADTISVISTYVDAIVMRHPQEGAARLATEFSGQVPVLNAGDGSNQHPTQTLLDLFTIQETQGRLDNLHIAMVGDLKYGRTVHSLTQALAKFSGNRFYFIAPDALAMPQYILDMLDEKGMAWSLHGSIEEVMADVDILYMTRVQKERLDPSEYANVKAQFVLRASDLNGARENMKVLHPLPRIDEITTDVDKTPHAWYFQQAGNGIFARQALLALVLNSELSL</sequence>
<protein>
    <recommendedName>
        <fullName evidence="1">Aspartate carbamoyltransferase catalytic subunit</fullName>
        <ecNumber evidence="1">2.1.3.2</ecNumber>
    </recommendedName>
    <alternativeName>
        <fullName evidence="1">Aspartate transcarbamylase</fullName>
        <shortName evidence="1">ATCase</shortName>
    </alternativeName>
</protein>
<proteinExistence type="inferred from homology"/>
<evidence type="ECO:0000255" key="1">
    <source>
        <dbReference type="HAMAP-Rule" id="MF_00001"/>
    </source>
</evidence>
<reference key="1">
    <citation type="journal article" date="2011" name="J. Bacteriol.">
        <title>Comparative genomics of 28 Salmonella enterica isolates: evidence for CRISPR-mediated adaptive sublineage evolution.</title>
        <authorList>
            <person name="Fricke W.F."/>
            <person name="Mammel M.K."/>
            <person name="McDermott P.F."/>
            <person name="Tartera C."/>
            <person name="White D.G."/>
            <person name="Leclerc J.E."/>
            <person name="Ravel J."/>
            <person name="Cebula T.A."/>
        </authorList>
    </citation>
    <scope>NUCLEOTIDE SEQUENCE [LARGE SCALE GENOMIC DNA]</scope>
    <source>
        <strain>SL476</strain>
    </source>
</reference>
<name>PYRB_SALHS</name>
<dbReference type="EC" id="2.1.3.2" evidence="1"/>
<dbReference type="EMBL" id="CP001120">
    <property type="protein sequence ID" value="ACF66674.1"/>
    <property type="molecule type" value="Genomic_DNA"/>
</dbReference>
<dbReference type="RefSeq" id="WP_000013055.1">
    <property type="nucleotide sequence ID" value="NC_011083.1"/>
</dbReference>
<dbReference type="SMR" id="B4TG41"/>
<dbReference type="KEGG" id="seh:SeHA_C4863"/>
<dbReference type="HOGENOM" id="CLU_043846_1_2_6"/>
<dbReference type="UniPathway" id="UPA00070">
    <property type="reaction ID" value="UER00116"/>
</dbReference>
<dbReference type="Proteomes" id="UP000001866">
    <property type="component" value="Chromosome"/>
</dbReference>
<dbReference type="GO" id="GO:0005829">
    <property type="term" value="C:cytosol"/>
    <property type="evidence" value="ECO:0007669"/>
    <property type="project" value="TreeGrafter"/>
</dbReference>
<dbReference type="GO" id="GO:0016597">
    <property type="term" value="F:amino acid binding"/>
    <property type="evidence" value="ECO:0007669"/>
    <property type="project" value="InterPro"/>
</dbReference>
<dbReference type="GO" id="GO:0004070">
    <property type="term" value="F:aspartate carbamoyltransferase activity"/>
    <property type="evidence" value="ECO:0007669"/>
    <property type="project" value="UniProtKB-UniRule"/>
</dbReference>
<dbReference type="GO" id="GO:0006207">
    <property type="term" value="P:'de novo' pyrimidine nucleobase biosynthetic process"/>
    <property type="evidence" value="ECO:0007669"/>
    <property type="project" value="InterPro"/>
</dbReference>
<dbReference type="GO" id="GO:0044205">
    <property type="term" value="P:'de novo' UMP biosynthetic process"/>
    <property type="evidence" value="ECO:0007669"/>
    <property type="project" value="UniProtKB-UniRule"/>
</dbReference>
<dbReference type="GO" id="GO:0006520">
    <property type="term" value="P:amino acid metabolic process"/>
    <property type="evidence" value="ECO:0007669"/>
    <property type="project" value="InterPro"/>
</dbReference>
<dbReference type="FunFam" id="3.40.50.1370:FF:000001">
    <property type="entry name" value="Aspartate carbamoyltransferase"/>
    <property type="match status" value="1"/>
</dbReference>
<dbReference type="FunFam" id="3.40.50.1370:FF:000002">
    <property type="entry name" value="Aspartate carbamoyltransferase 2"/>
    <property type="match status" value="1"/>
</dbReference>
<dbReference type="Gene3D" id="3.40.50.1370">
    <property type="entry name" value="Aspartate/ornithine carbamoyltransferase"/>
    <property type="match status" value="2"/>
</dbReference>
<dbReference type="HAMAP" id="MF_00001">
    <property type="entry name" value="Asp_carb_tr"/>
    <property type="match status" value="1"/>
</dbReference>
<dbReference type="InterPro" id="IPR006132">
    <property type="entry name" value="Asp/Orn_carbamoyltranf_P-bd"/>
</dbReference>
<dbReference type="InterPro" id="IPR006130">
    <property type="entry name" value="Asp/Orn_carbamoylTrfase"/>
</dbReference>
<dbReference type="InterPro" id="IPR036901">
    <property type="entry name" value="Asp/Orn_carbamoylTrfase_sf"/>
</dbReference>
<dbReference type="InterPro" id="IPR002082">
    <property type="entry name" value="Asp_carbamoyltransf"/>
</dbReference>
<dbReference type="InterPro" id="IPR006131">
    <property type="entry name" value="Asp_carbamoyltransf_Asp/Orn-bd"/>
</dbReference>
<dbReference type="NCBIfam" id="TIGR00670">
    <property type="entry name" value="asp_carb_tr"/>
    <property type="match status" value="1"/>
</dbReference>
<dbReference type="NCBIfam" id="NF002032">
    <property type="entry name" value="PRK00856.1"/>
    <property type="match status" value="1"/>
</dbReference>
<dbReference type="PANTHER" id="PTHR45753:SF6">
    <property type="entry name" value="ASPARTATE CARBAMOYLTRANSFERASE"/>
    <property type="match status" value="1"/>
</dbReference>
<dbReference type="PANTHER" id="PTHR45753">
    <property type="entry name" value="ORNITHINE CARBAMOYLTRANSFERASE, MITOCHONDRIAL"/>
    <property type="match status" value="1"/>
</dbReference>
<dbReference type="Pfam" id="PF00185">
    <property type="entry name" value="OTCace"/>
    <property type="match status" value="1"/>
</dbReference>
<dbReference type="Pfam" id="PF02729">
    <property type="entry name" value="OTCace_N"/>
    <property type="match status" value="1"/>
</dbReference>
<dbReference type="PRINTS" id="PR00100">
    <property type="entry name" value="AOTCASE"/>
</dbReference>
<dbReference type="PRINTS" id="PR00101">
    <property type="entry name" value="ATCASE"/>
</dbReference>
<dbReference type="SUPFAM" id="SSF53671">
    <property type="entry name" value="Aspartate/ornithine carbamoyltransferase"/>
    <property type="match status" value="1"/>
</dbReference>
<dbReference type="PROSITE" id="PS00097">
    <property type="entry name" value="CARBAMOYLTRANSFERASE"/>
    <property type="match status" value="1"/>
</dbReference>
<comment type="function">
    <text evidence="1">Catalyzes the condensation of carbamoyl phosphate and aspartate to form carbamoyl aspartate and inorganic phosphate, the committed step in the de novo pyrimidine nucleotide biosynthesis pathway.</text>
</comment>
<comment type="catalytic activity">
    <reaction evidence="1">
        <text>carbamoyl phosphate + L-aspartate = N-carbamoyl-L-aspartate + phosphate + H(+)</text>
        <dbReference type="Rhea" id="RHEA:20013"/>
        <dbReference type="ChEBI" id="CHEBI:15378"/>
        <dbReference type="ChEBI" id="CHEBI:29991"/>
        <dbReference type="ChEBI" id="CHEBI:32814"/>
        <dbReference type="ChEBI" id="CHEBI:43474"/>
        <dbReference type="ChEBI" id="CHEBI:58228"/>
        <dbReference type="EC" id="2.1.3.2"/>
    </reaction>
</comment>
<comment type="pathway">
    <text evidence="1">Pyrimidine metabolism; UMP biosynthesis via de novo pathway; (S)-dihydroorotate from bicarbonate: step 2/3.</text>
</comment>
<comment type="subunit">
    <text evidence="1">Heterododecamer (2C3:3R2) of six catalytic PyrB chains organized as two trimers (C3), and six regulatory PyrI chains organized as three dimers (R2).</text>
</comment>
<comment type="similarity">
    <text evidence="1">Belongs to the aspartate/ornithine carbamoyltransferase superfamily. ATCase family.</text>
</comment>
<accession>B4TG41</accession>